<name>FXI3B_DANRE</name>
<accession>Q7T1C0</accession>
<keyword id="KW-0217">Developmental protein</keyword>
<keyword id="KW-0238">DNA-binding</keyword>
<keyword id="KW-0539">Nucleus</keyword>
<keyword id="KW-1185">Reference proteome</keyword>
<keyword id="KW-0804">Transcription</keyword>
<keyword id="KW-0805">Transcription regulation</keyword>
<proteinExistence type="evidence at transcript level"/>
<sequence length="383" mass="41279">MTSYESQGQSPTRCGPQFLSLGQEPPELSLYSDSYYPPPSLPSPQRTNPSSYELGDYAASSPNPYLWFNSPGMNSAPYLGGTPGPAGPSFVPQHYGMQRPYLGPGPPGGPGGELSWFSMPSQEDLMKLVRPPYSYSALIAMAIHGAPERRLTLSQIYQYVADNFPFYNKSKAGWQNSIRHNLSLNDCFKKVPRDEDDPGKGNYWTLDPNCEKMFDNGNFRRKRKRKSDSLPEKSSSGGNESGDSNGRGSPKSQSIDISTSPEKGPSPASTGPSPCLSNFLTEMSGVAAGSLDMEADPLSRPFTLSLPVDGAQRASQTTGFSTFTPSTTVSDWASPLPPPPPMSSSPSHSTLAYSGPVLSQFNGHFFPGLSSTGILYPREGTEV</sequence>
<comment type="function">
    <text evidence="4 5">Transcription factor required for epithelial cell differentiation (PubMed:17375188, PubMed:17555741). Involved in specification of skin ionocytes from epidermal precursors (PubMed:17375188, PubMed:17555741).</text>
</comment>
<comment type="subcellular location">
    <subcellularLocation>
        <location evidence="1">Nucleus</location>
    </subcellularLocation>
</comment>
<comment type="tissue specificity">
    <text evidence="5">Expressed in ionocyte precursors.</text>
</comment>
<gene>
    <name evidence="6 8" type="primary">foxi3b</name>
</gene>
<evidence type="ECO:0000250" key="1">
    <source>
        <dbReference type="UniProtKB" id="A8MTJ6"/>
    </source>
</evidence>
<evidence type="ECO:0000255" key="2">
    <source>
        <dbReference type="PROSITE-ProRule" id="PRU00089"/>
    </source>
</evidence>
<evidence type="ECO:0000256" key="3">
    <source>
        <dbReference type="SAM" id="MobiDB-lite"/>
    </source>
</evidence>
<evidence type="ECO:0000269" key="4">
    <source>
    </source>
</evidence>
<evidence type="ECO:0000269" key="5">
    <source>
    </source>
</evidence>
<evidence type="ECO:0000303" key="6">
    <source>
    </source>
</evidence>
<evidence type="ECO:0000305" key="7"/>
<evidence type="ECO:0000312" key="8">
    <source>
        <dbReference type="ZFIN" id="ZDB-GENE-031126-4"/>
    </source>
</evidence>
<protein>
    <recommendedName>
        <fullName evidence="7">Forkhead box protein I3-B</fullName>
    </recommendedName>
</protein>
<organism>
    <name type="scientific">Danio rerio</name>
    <name type="common">Zebrafish</name>
    <name type="synonym">Brachydanio rerio</name>
    <dbReference type="NCBI Taxonomy" id="7955"/>
    <lineage>
        <taxon>Eukaryota</taxon>
        <taxon>Metazoa</taxon>
        <taxon>Chordata</taxon>
        <taxon>Craniata</taxon>
        <taxon>Vertebrata</taxon>
        <taxon>Euteleostomi</taxon>
        <taxon>Actinopterygii</taxon>
        <taxon>Neopterygii</taxon>
        <taxon>Teleostei</taxon>
        <taxon>Ostariophysi</taxon>
        <taxon>Cypriniformes</taxon>
        <taxon>Danionidae</taxon>
        <taxon>Danioninae</taxon>
        <taxon>Danio</taxon>
    </lineage>
</organism>
<reference key="1">
    <citation type="journal article" date="2003" name="Dev. Dyn.">
        <title>Expression and phylogenetic analyses of three zebrafish FoxI class genes.</title>
        <authorList>
            <person name="Solomon K.S."/>
            <person name="Logsdon J.M. Jr."/>
            <person name="Fritz A."/>
        </authorList>
    </citation>
    <scope>NUCLEOTIDE SEQUENCE [MRNA]</scope>
</reference>
<reference key="2">
    <citation type="journal article" date="2013" name="Nature">
        <title>The zebrafish reference genome sequence and its relationship to the human genome.</title>
        <authorList>
            <person name="Howe K."/>
            <person name="Clark M.D."/>
            <person name="Torroja C.F."/>
            <person name="Torrance J."/>
            <person name="Berthelot C."/>
            <person name="Muffato M."/>
            <person name="Collins J.E."/>
            <person name="Humphray S."/>
            <person name="McLaren K."/>
            <person name="Matthews L."/>
            <person name="McLaren S."/>
            <person name="Sealy I."/>
            <person name="Caccamo M."/>
            <person name="Churcher C."/>
            <person name="Scott C."/>
            <person name="Barrett J.C."/>
            <person name="Koch R."/>
            <person name="Rauch G.J."/>
            <person name="White S."/>
            <person name="Chow W."/>
            <person name="Kilian B."/>
            <person name="Quintais L.T."/>
            <person name="Guerra-Assuncao J.A."/>
            <person name="Zhou Y."/>
            <person name="Gu Y."/>
            <person name="Yen J."/>
            <person name="Vogel J.H."/>
            <person name="Eyre T."/>
            <person name="Redmond S."/>
            <person name="Banerjee R."/>
            <person name="Chi J."/>
            <person name="Fu B."/>
            <person name="Langley E."/>
            <person name="Maguire S.F."/>
            <person name="Laird G.K."/>
            <person name="Lloyd D."/>
            <person name="Kenyon E."/>
            <person name="Donaldson S."/>
            <person name="Sehra H."/>
            <person name="Almeida-King J."/>
            <person name="Loveland J."/>
            <person name="Trevanion S."/>
            <person name="Jones M."/>
            <person name="Quail M."/>
            <person name="Willey D."/>
            <person name="Hunt A."/>
            <person name="Burton J."/>
            <person name="Sims S."/>
            <person name="McLay K."/>
            <person name="Plumb B."/>
            <person name="Davis J."/>
            <person name="Clee C."/>
            <person name="Oliver K."/>
            <person name="Clark R."/>
            <person name="Riddle C."/>
            <person name="Elliot D."/>
            <person name="Threadgold G."/>
            <person name="Harden G."/>
            <person name="Ware D."/>
            <person name="Begum S."/>
            <person name="Mortimore B."/>
            <person name="Kerry G."/>
            <person name="Heath P."/>
            <person name="Phillimore B."/>
            <person name="Tracey A."/>
            <person name="Corby N."/>
            <person name="Dunn M."/>
            <person name="Johnson C."/>
            <person name="Wood J."/>
            <person name="Clark S."/>
            <person name="Pelan S."/>
            <person name="Griffiths G."/>
            <person name="Smith M."/>
            <person name="Glithero R."/>
            <person name="Howden P."/>
            <person name="Barker N."/>
            <person name="Lloyd C."/>
            <person name="Stevens C."/>
            <person name="Harley J."/>
            <person name="Holt K."/>
            <person name="Panagiotidis G."/>
            <person name="Lovell J."/>
            <person name="Beasley H."/>
            <person name="Henderson C."/>
            <person name="Gordon D."/>
            <person name="Auger K."/>
            <person name="Wright D."/>
            <person name="Collins J."/>
            <person name="Raisen C."/>
            <person name="Dyer L."/>
            <person name="Leung K."/>
            <person name="Robertson L."/>
            <person name="Ambridge K."/>
            <person name="Leongamornlert D."/>
            <person name="McGuire S."/>
            <person name="Gilderthorp R."/>
            <person name="Griffiths C."/>
            <person name="Manthravadi D."/>
            <person name="Nichol S."/>
            <person name="Barker G."/>
            <person name="Whitehead S."/>
            <person name="Kay M."/>
            <person name="Brown J."/>
            <person name="Murnane C."/>
            <person name="Gray E."/>
            <person name="Humphries M."/>
            <person name="Sycamore N."/>
            <person name="Barker D."/>
            <person name="Saunders D."/>
            <person name="Wallis J."/>
            <person name="Babbage A."/>
            <person name="Hammond S."/>
            <person name="Mashreghi-Mohammadi M."/>
            <person name="Barr L."/>
            <person name="Martin S."/>
            <person name="Wray P."/>
            <person name="Ellington A."/>
            <person name="Matthews N."/>
            <person name="Ellwood M."/>
            <person name="Woodmansey R."/>
            <person name="Clark G."/>
            <person name="Cooper J."/>
            <person name="Tromans A."/>
            <person name="Grafham D."/>
            <person name="Skuce C."/>
            <person name="Pandian R."/>
            <person name="Andrews R."/>
            <person name="Harrison E."/>
            <person name="Kimberley A."/>
            <person name="Garnett J."/>
            <person name="Fosker N."/>
            <person name="Hall R."/>
            <person name="Garner P."/>
            <person name="Kelly D."/>
            <person name="Bird C."/>
            <person name="Palmer S."/>
            <person name="Gehring I."/>
            <person name="Berger A."/>
            <person name="Dooley C.M."/>
            <person name="Ersan-Urun Z."/>
            <person name="Eser C."/>
            <person name="Geiger H."/>
            <person name="Geisler M."/>
            <person name="Karotki L."/>
            <person name="Kirn A."/>
            <person name="Konantz J."/>
            <person name="Konantz M."/>
            <person name="Oberlander M."/>
            <person name="Rudolph-Geiger S."/>
            <person name="Teucke M."/>
            <person name="Lanz C."/>
            <person name="Raddatz G."/>
            <person name="Osoegawa K."/>
            <person name="Zhu B."/>
            <person name="Rapp A."/>
            <person name="Widaa S."/>
            <person name="Langford C."/>
            <person name="Yang F."/>
            <person name="Schuster S.C."/>
            <person name="Carter N.P."/>
            <person name="Harrow J."/>
            <person name="Ning Z."/>
            <person name="Herrero J."/>
            <person name="Searle S.M."/>
            <person name="Enright A."/>
            <person name="Geisler R."/>
            <person name="Plasterk R.H."/>
            <person name="Lee C."/>
            <person name="Westerfield M."/>
            <person name="de Jong P.J."/>
            <person name="Zon L.I."/>
            <person name="Postlethwait J.H."/>
            <person name="Nusslein-Volhard C."/>
            <person name="Hubbard T.J."/>
            <person name="Roest Crollius H."/>
            <person name="Rogers J."/>
            <person name="Stemple D.L."/>
        </authorList>
    </citation>
    <scope>NUCLEOTIDE SEQUENCE [LARGE SCALE GENOMIC DNA]</scope>
    <source>
        <strain>Tuebingen</strain>
    </source>
</reference>
<reference key="3">
    <citation type="journal article" date="2007" name="Dev. Biol.">
        <title>Foxi3 transcription factors and Notch signaling control the formation of skin ionocytes from epidermal precursors of the zebrafish embryo.</title>
        <authorList>
            <person name="Jaenicke M."/>
            <person name="Carney T.J."/>
            <person name="Hammerschmidt M."/>
        </authorList>
    </citation>
    <scope>FUNCTION</scope>
    <scope>TISSUE SPECIFICITY</scope>
</reference>
<reference key="4">
    <citation type="journal article" date="2007" name="PLoS ONE">
        <title>A positive regulatory loop between foxi3a and foxi3b is essential for specification and differentiation of zebrafish epidermal ionocytes.</title>
        <authorList>
            <person name="Hsiao C.D."/>
            <person name="You M.S."/>
            <person name="Guh Y.J."/>
            <person name="Ma M."/>
            <person name="Jiang Y.J."/>
            <person name="Hwang P.P."/>
        </authorList>
    </citation>
    <scope>FUNCTION</scope>
</reference>
<feature type="chain" id="PRO_0000458757" description="Forkhead box protein I3-B">
    <location>
        <begin position="1"/>
        <end position="383"/>
    </location>
</feature>
<feature type="DNA-binding region" description="Fork-head" evidence="2">
    <location>
        <begin position="130"/>
        <end position="224"/>
    </location>
</feature>
<feature type="region of interest" description="Disordered" evidence="3">
    <location>
        <begin position="1"/>
        <end position="55"/>
    </location>
</feature>
<feature type="region of interest" description="Disordered" evidence="3">
    <location>
        <begin position="215"/>
        <end position="277"/>
    </location>
</feature>
<feature type="region of interest" description="Disordered" evidence="3">
    <location>
        <begin position="317"/>
        <end position="348"/>
    </location>
</feature>
<feature type="short sequence motif" description="Nuclear localization signal" evidence="1">
    <location>
        <begin position="220"/>
        <end position="226"/>
    </location>
</feature>
<feature type="compositionally biased region" description="Polar residues" evidence="3">
    <location>
        <begin position="1"/>
        <end position="12"/>
    </location>
</feature>
<feature type="compositionally biased region" description="Low complexity" evidence="3">
    <location>
        <begin position="25"/>
        <end position="35"/>
    </location>
</feature>
<feature type="compositionally biased region" description="Low complexity" evidence="3">
    <location>
        <begin position="234"/>
        <end position="249"/>
    </location>
</feature>
<feature type="compositionally biased region" description="Polar residues" evidence="3">
    <location>
        <begin position="250"/>
        <end position="277"/>
    </location>
</feature>
<feature type="compositionally biased region" description="Low complexity" evidence="3">
    <location>
        <begin position="317"/>
        <end position="330"/>
    </location>
</feature>
<dbReference type="EMBL" id="AY331584">
    <property type="protein sequence ID" value="AAP92810.1"/>
    <property type="molecule type" value="mRNA"/>
</dbReference>
<dbReference type="EMBL" id="BX248097">
    <property type="status" value="NOT_ANNOTATED_CDS"/>
    <property type="molecule type" value="Genomic_DNA"/>
</dbReference>
<dbReference type="RefSeq" id="NP_944600.1">
    <property type="nucleotide sequence ID" value="NM_198918.1"/>
</dbReference>
<dbReference type="SMR" id="Q7T1C0"/>
<dbReference type="FunCoup" id="Q7T1C0">
    <property type="interactions" value="1"/>
</dbReference>
<dbReference type="GeneID" id="387258"/>
<dbReference type="KEGG" id="dre:387258"/>
<dbReference type="AGR" id="ZFIN:ZDB-GENE-031126-4"/>
<dbReference type="CTD" id="387258"/>
<dbReference type="ZFIN" id="ZDB-GENE-031126-4">
    <property type="gene designation" value="foxi3b"/>
</dbReference>
<dbReference type="OrthoDB" id="5954824at2759"/>
<dbReference type="PhylomeDB" id="Q7T1C0"/>
<dbReference type="PRO" id="PR:Q7T1C0"/>
<dbReference type="Proteomes" id="UP000000437">
    <property type="component" value="Alternate scaffold 14"/>
</dbReference>
<dbReference type="Proteomes" id="UP000000437">
    <property type="component" value="Chromosome 14"/>
</dbReference>
<dbReference type="GO" id="GO:0005634">
    <property type="term" value="C:nucleus"/>
    <property type="evidence" value="ECO:0000250"/>
    <property type="project" value="UniProtKB"/>
</dbReference>
<dbReference type="GO" id="GO:0000981">
    <property type="term" value="F:DNA-binding transcription factor activity, RNA polymerase II-specific"/>
    <property type="evidence" value="ECO:0000250"/>
    <property type="project" value="UniProtKB"/>
</dbReference>
<dbReference type="GO" id="GO:0000978">
    <property type="term" value="F:RNA polymerase II cis-regulatory region sequence-specific DNA binding"/>
    <property type="evidence" value="ECO:0000318"/>
    <property type="project" value="GO_Central"/>
</dbReference>
<dbReference type="GO" id="GO:0009653">
    <property type="term" value="P:anatomical structure morphogenesis"/>
    <property type="evidence" value="ECO:0000318"/>
    <property type="project" value="GO_Central"/>
</dbReference>
<dbReference type="GO" id="GO:0030154">
    <property type="term" value="P:cell differentiation"/>
    <property type="evidence" value="ECO:0000318"/>
    <property type="project" value="GO_Central"/>
</dbReference>
<dbReference type="GO" id="GO:0009957">
    <property type="term" value="P:epidermal cell fate specification"/>
    <property type="evidence" value="ECO:0000314"/>
    <property type="project" value="ZFIN"/>
</dbReference>
<dbReference type="GO" id="GO:0062236">
    <property type="term" value="P:ionocyte differentiation"/>
    <property type="evidence" value="ECO:0000315"/>
    <property type="project" value="ZFIN"/>
</dbReference>
<dbReference type="GO" id="GO:0006357">
    <property type="term" value="P:regulation of transcription by RNA polymerase II"/>
    <property type="evidence" value="ECO:0000318"/>
    <property type="project" value="GO_Central"/>
</dbReference>
<dbReference type="CDD" id="cd20053">
    <property type="entry name" value="FH_FOXI1"/>
    <property type="match status" value="1"/>
</dbReference>
<dbReference type="FunFam" id="1.10.10.10:FF:000016">
    <property type="entry name" value="Forkhead box protein I1"/>
    <property type="match status" value="1"/>
</dbReference>
<dbReference type="Gene3D" id="1.10.10.10">
    <property type="entry name" value="Winged helix-like DNA-binding domain superfamily/Winged helix DNA-binding domain"/>
    <property type="match status" value="1"/>
</dbReference>
<dbReference type="InterPro" id="IPR001766">
    <property type="entry name" value="Fork_head_dom"/>
</dbReference>
<dbReference type="InterPro" id="IPR050211">
    <property type="entry name" value="FOX_domain-containing"/>
</dbReference>
<dbReference type="InterPro" id="IPR018122">
    <property type="entry name" value="TF_fork_head_CS_1"/>
</dbReference>
<dbReference type="InterPro" id="IPR030456">
    <property type="entry name" value="TF_fork_head_CS_2"/>
</dbReference>
<dbReference type="InterPro" id="IPR036388">
    <property type="entry name" value="WH-like_DNA-bd_sf"/>
</dbReference>
<dbReference type="InterPro" id="IPR036390">
    <property type="entry name" value="WH_DNA-bd_sf"/>
</dbReference>
<dbReference type="PANTHER" id="PTHR11829:SF383">
    <property type="entry name" value="FORKHEAD BOX I2-RELATED"/>
    <property type="match status" value="1"/>
</dbReference>
<dbReference type="PANTHER" id="PTHR11829">
    <property type="entry name" value="FORKHEAD BOX PROTEIN"/>
    <property type="match status" value="1"/>
</dbReference>
<dbReference type="Pfam" id="PF00250">
    <property type="entry name" value="Forkhead"/>
    <property type="match status" value="1"/>
</dbReference>
<dbReference type="PRINTS" id="PR00053">
    <property type="entry name" value="FORKHEAD"/>
</dbReference>
<dbReference type="SMART" id="SM00339">
    <property type="entry name" value="FH"/>
    <property type="match status" value="1"/>
</dbReference>
<dbReference type="SUPFAM" id="SSF46785">
    <property type="entry name" value="Winged helix' DNA-binding domain"/>
    <property type="match status" value="1"/>
</dbReference>
<dbReference type="PROSITE" id="PS00657">
    <property type="entry name" value="FORK_HEAD_1"/>
    <property type="match status" value="1"/>
</dbReference>
<dbReference type="PROSITE" id="PS00658">
    <property type="entry name" value="FORK_HEAD_2"/>
    <property type="match status" value="1"/>
</dbReference>
<dbReference type="PROSITE" id="PS50039">
    <property type="entry name" value="FORK_HEAD_3"/>
    <property type="match status" value="1"/>
</dbReference>